<evidence type="ECO:0000255" key="1"/>
<evidence type="ECO:0000269" key="2">
    <source>
    </source>
</evidence>
<evidence type="ECO:0000305" key="3"/>
<dbReference type="EC" id="3.1.3.-" evidence="2"/>
<dbReference type="EMBL" id="D32216">
    <property type="protein sequence ID" value="BAA06965.1"/>
    <property type="molecule type" value="Genomic_DNA"/>
</dbReference>
<dbReference type="EMBL" id="D84432">
    <property type="protein sequence ID" value="BAA12429.1"/>
    <property type="molecule type" value="Genomic_DNA"/>
</dbReference>
<dbReference type="EMBL" id="AL009126">
    <property type="protein sequence ID" value="CAB14524.2"/>
    <property type="molecule type" value="Genomic_DNA"/>
</dbReference>
<dbReference type="PIR" id="H69688">
    <property type="entry name" value="H69688"/>
</dbReference>
<dbReference type="RefSeq" id="NP_390460.2">
    <property type="nucleotide sequence ID" value="NC_000964.3"/>
</dbReference>
<dbReference type="RefSeq" id="WP_004398842.1">
    <property type="nucleotide sequence ID" value="NZ_OZ025638.1"/>
</dbReference>
<dbReference type="SMR" id="P45943"/>
<dbReference type="FunCoup" id="P45943">
    <property type="interactions" value="67"/>
</dbReference>
<dbReference type="STRING" id="224308.BSU25830"/>
<dbReference type="PaxDb" id="224308-BSU25830"/>
<dbReference type="EnsemblBacteria" id="CAB14524">
    <property type="protein sequence ID" value="CAB14524"/>
    <property type="gene ID" value="BSU_25830"/>
</dbReference>
<dbReference type="GeneID" id="937796"/>
<dbReference type="KEGG" id="bsu:BSU25830"/>
<dbReference type="PATRIC" id="fig|224308.179.peg.2807"/>
<dbReference type="eggNOG" id="COG0457">
    <property type="taxonomic scope" value="Bacteria"/>
</dbReference>
<dbReference type="InParanoid" id="P45943"/>
<dbReference type="OrthoDB" id="2957368at2"/>
<dbReference type="PhylomeDB" id="P45943"/>
<dbReference type="BioCyc" id="BSUB:BSU25830-MONOMER"/>
<dbReference type="Proteomes" id="UP000001570">
    <property type="component" value="Chromosome"/>
</dbReference>
<dbReference type="GO" id="GO:0005737">
    <property type="term" value="C:cytoplasm"/>
    <property type="evidence" value="ECO:0007669"/>
    <property type="project" value="UniProtKB-SubCell"/>
</dbReference>
<dbReference type="GO" id="GO:0004721">
    <property type="term" value="F:phosphoprotein phosphatase activity"/>
    <property type="evidence" value="ECO:0007669"/>
    <property type="project" value="UniProtKB-KW"/>
</dbReference>
<dbReference type="GO" id="GO:0030435">
    <property type="term" value="P:sporulation resulting in formation of a cellular spore"/>
    <property type="evidence" value="ECO:0007669"/>
    <property type="project" value="UniProtKB-KW"/>
</dbReference>
<dbReference type="Gene3D" id="1.25.40.10">
    <property type="entry name" value="Tetratricopeptide repeat domain"/>
    <property type="match status" value="1"/>
</dbReference>
<dbReference type="InterPro" id="IPR051476">
    <property type="entry name" value="Bac_ResReg_Asp_Phosphatase"/>
</dbReference>
<dbReference type="InterPro" id="IPR011990">
    <property type="entry name" value="TPR-like_helical_dom_sf"/>
</dbReference>
<dbReference type="InterPro" id="IPR019734">
    <property type="entry name" value="TPR_rpt"/>
</dbReference>
<dbReference type="PANTHER" id="PTHR46630">
    <property type="entry name" value="TETRATRICOPEPTIDE REPEAT PROTEIN 29"/>
    <property type="match status" value="1"/>
</dbReference>
<dbReference type="PANTHER" id="PTHR46630:SF1">
    <property type="entry name" value="TETRATRICOPEPTIDE REPEAT PROTEIN 29"/>
    <property type="match status" value="1"/>
</dbReference>
<dbReference type="Pfam" id="PF18801">
    <property type="entry name" value="RapH_N"/>
    <property type="match status" value="1"/>
</dbReference>
<dbReference type="Pfam" id="PF13424">
    <property type="entry name" value="TPR_12"/>
    <property type="match status" value="1"/>
</dbReference>
<dbReference type="SMART" id="SM00028">
    <property type="entry name" value="TPR"/>
    <property type="match status" value="4"/>
</dbReference>
<dbReference type="SUPFAM" id="SSF48452">
    <property type="entry name" value="TPR-like"/>
    <property type="match status" value="2"/>
</dbReference>
<dbReference type="PROSITE" id="PS50005">
    <property type="entry name" value="TPR"/>
    <property type="match status" value="3"/>
</dbReference>
<dbReference type="PROSITE" id="PS50293">
    <property type="entry name" value="TPR_REGION"/>
    <property type="match status" value="2"/>
</dbReference>
<reference key="1">
    <citation type="journal article" date="1995" name="Microbiology">
        <title>Complete nucleotide sequence of a skin element excised by DNA rearrangement during sporulation in Bacillus subtilis.</title>
        <authorList>
            <person name="Takemaru K."/>
            <person name="Mizuno M."/>
            <person name="Sato T."/>
            <person name="Takeuchi M."/>
            <person name="Kobayashi Y."/>
        </authorList>
    </citation>
    <scope>NUCLEOTIDE SEQUENCE [GENOMIC DNA]</scope>
    <source>
        <strain>168 / JH642</strain>
    </source>
</reference>
<reference key="2">
    <citation type="journal article" date="1996" name="Microbiology">
        <title>Systematic sequencing of the 283 kb 210 degrees-232 degrees region of the Bacillus subtilis genome containing the skin element and many sporulation genes.</title>
        <authorList>
            <person name="Mizuno M."/>
            <person name="Masuda S."/>
            <person name="Takemaru K."/>
            <person name="Hosono S."/>
            <person name="Sato T."/>
            <person name="Takeuchi M."/>
            <person name="Kobayashi Y."/>
        </authorList>
    </citation>
    <scope>NUCLEOTIDE SEQUENCE [GENOMIC DNA]</scope>
    <source>
        <strain>168 / JH642</strain>
    </source>
</reference>
<reference key="3">
    <citation type="journal article" date="1997" name="Nature">
        <title>The complete genome sequence of the Gram-positive bacterium Bacillus subtilis.</title>
        <authorList>
            <person name="Kunst F."/>
            <person name="Ogasawara N."/>
            <person name="Moszer I."/>
            <person name="Albertini A.M."/>
            <person name="Alloni G."/>
            <person name="Azevedo V."/>
            <person name="Bertero M.G."/>
            <person name="Bessieres P."/>
            <person name="Bolotin A."/>
            <person name="Borchert S."/>
            <person name="Borriss R."/>
            <person name="Boursier L."/>
            <person name="Brans A."/>
            <person name="Braun M."/>
            <person name="Brignell S.C."/>
            <person name="Bron S."/>
            <person name="Brouillet S."/>
            <person name="Bruschi C.V."/>
            <person name="Caldwell B."/>
            <person name="Capuano V."/>
            <person name="Carter N.M."/>
            <person name="Choi S.-K."/>
            <person name="Codani J.-J."/>
            <person name="Connerton I.F."/>
            <person name="Cummings N.J."/>
            <person name="Daniel R.A."/>
            <person name="Denizot F."/>
            <person name="Devine K.M."/>
            <person name="Duesterhoeft A."/>
            <person name="Ehrlich S.D."/>
            <person name="Emmerson P.T."/>
            <person name="Entian K.-D."/>
            <person name="Errington J."/>
            <person name="Fabret C."/>
            <person name="Ferrari E."/>
            <person name="Foulger D."/>
            <person name="Fritz C."/>
            <person name="Fujita M."/>
            <person name="Fujita Y."/>
            <person name="Fuma S."/>
            <person name="Galizzi A."/>
            <person name="Galleron N."/>
            <person name="Ghim S.-Y."/>
            <person name="Glaser P."/>
            <person name="Goffeau A."/>
            <person name="Golightly E.J."/>
            <person name="Grandi G."/>
            <person name="Guiseppi G."/>
            <person name="Guy B.J."/>
            <person name="Haga K."/>
            <person name="Haiech J."/>
            <person name="Harwood C.R."/>
            <person name="Henaut A."/>
            <person name="Hilbert H."/>
            <person name="Holsappel S."/>
            <person name="Hosono S."/>
            <person name="Hullo M.-F."/>
            <person name="Itaya M."/>
            <person name="Jones L.-M."/>
            <person name="Joris B."/>
            <person name="Karamata D."/>
            <person name="Kasahara Y."/>
            <person name="Klaerr-Blanchard M."/>
            <person name="Klein C."/>
            <person name="Kobayashi Y."/>
            <person name="Koetter P."/>
            <person name="Koningstein G."/>
            <person name="Krogh S."/>
            <person name="Kumano M."/>
            <person name="Kurita K."/>
            <person name="Lapidus A."/>
            <person name="Lardinois S."/>
            <person name="Lauber J."/>
            <person name="Lazarevic V."/>
            <person name="Lee S.-M."/>
            <person name="Levine A."/>
            <person name="Liu H."/>
            <person name="Masuda S."/>
            <person name="Mauel C."/>
            <person name="Medigue C."/>
            <person name="Medina N."/>
            <person name="Mellado R.P."/>
            <person name="Mizuno M."/>
            <person name="Moestl D."/>
            <person name="Nakai S."/>
            <person name="Noback M."/>
            <person name="Noone D."/>
            <person name="O'Reilly M."/>
            <person name="Ogawa K."/>
            <person name="Ogiwara A."/>
            <person name="Oudega B."/>
            <person name="Park S.-H."/>
            <person name="Parro V."/>
            <person name="Pohl T.M."/>
            <person name="Portetelle D."/>
            <person name="Porwollik S."/>
            <person name="Prescott A.M."/>
            <person name="Presecan E."/>
            <person name="Pujic P."/>
            <person name="Purnelle B."/>
            <person name="Rapoport G."/>
            <person name="Rey M."/>
            <person name="Reynolds S."/>
            <person name="Rieger M."/>
            <person name="Rivolta C."/>
            <person name="Rocha E."/>
            <person name="Roche B."/>
            <person name="Rose M."/>
            <person name="Sadaie Y."/>
            <person name="Sato T."/>
            <person name="Scanlan E."/>
            <person name="Schleich S."/>
            <person name="Schroeter R."/>
            <person name="Scoffone F."/>
            <person name="Sekiguchi J."/>
            <person name="Sekowska A."/>
            <person name="Seror S.J."/>
            <person name="Serror P."/>
            <person name="Shin B.-S."/>
            <person name="Soldo B."/>
            <person name="Sorokin A."/>
            <person name="Tacconi E."/>
            <person name="Takagi T."/>
            <person name="Takahashi H."/>
            <person name="Takemaru K."/>
            <person name="Takeuchi M."/>
            <person name="Tamakoshi A."/>
            <person name="Tanaka T."/>
            <person name="Terpstra P."/>
            <person name="Tognoni A."/>
            <person name="Tosato V."/>
            <person name="Uchiyama S."/>
            <person name="Vandenbol M."/>
            <person name="Vannier F."/>
            <person name="Vassarotti A."/>
            <person name="Viari A."/>
            <person name="Wambutt R."/>
            <person name="Wedler E."/>
            <person name="Wedler H."/>
            <person name="Weitzenegger T."/>
            <person name="Winters P."/>
            <person name="Wipat A."/>
            <person name="Yamamoto H."/>
            <person name="Yamane K."/>
            <person name="Yasumoto K."/>
            <person name="Yata K."/>
            <person name="Yoshida K."/>
            <person name="Yoshikawa H.-F."/>
            <person name="Zumstein E."/>
            <person name="Yoshikawa H."/>
            <person name="Danchin A."/>
        </authorList>
    </citation>
    <scope>NUCLEOTIDE SEQUENCE [LARGE SCALE GENOMIC DNA]</scope>
    <source>
        <strain>168</strain>
    </source>
</reference>
<reference key="4">
    <citation type="journal article" date="2009" name="Microbiology">
        <title>From a consortium sequence to a unified sequence: the Bacillus subtilis 168 reference genome a decade later.</title>
        <authorList>
            <person name="Barbe V."/>
            <person name="Cruveiller S."/>
            <person name="Kunst F."/>
            <person name="Lenoble P."/>
            <person name="Meurice G."/>
            <person name="Sekowska A."/>
            <person name="Vallenet D."/>
            <person name="Wang T."/>
            <person name="Moszer I."/>
            <person name="Medigue C."/>
            <person name="Danchin A."/>
        </authorList>
    </citation>
    <scope>SEQUENCE REVISION TO 275</scope>
</reference>
<reference key="5">
    <citation type="journal article" date="1995" name="Gene">
        <title>Analysis of a Bacillus subtilis genome fragment using a co-operative computer system prototype.</title>
        <authorList>
            <person name="Medigue C."/>
            <person name="Moszer I."/>
            <person name="Viari A."/>
            <person name="Danchin A."/>
        </authorList>
    </citation>
    <scope>IDENTIFICATION</scope>
</reference>
<reference key="6">
    <citation type="journal article" date="2000" name="J. Bacteriol.">
        <title>Differential processing of propeptide inhibitors of Rap phosphatases in Bacillus subtilis.</title>
        <authorList>
            <person name="Jiang M."/>
            <person name="Grau R."/>
            <person name="Perego M."/>
        </authorList>
    </citation>
    <scope>FUNCTION</scope>
    <scope>CATALYTIC ACTIVITY</scope>
    <scope>ACTIVITY REGULATION</scope>
    <scope>INDUCTION</scope>
    <source>
        <strain>168 / JH642</strain>
    </source>
</reference>
<protein>
    <recommendedName>
        <fullName evidence="3">Response regulator aspartate phosphatase E</fullName>
        <ecNumber evidence="2">3.1.3.-</ecNumber>
    </recommendedName>
</protein>
<gene>
    <name type="primary">rapE</name>
    <name type="synonym">yqcH</name>
    <name type="ordered locus">BSU25830</name>
</gene>
<keyword id="KW-0175">Coiled coil</keyword>
<keyword id="KW-0963">Cytoplasm</keyword>
<keyword id="KW-0378">Hydrolase</keyword>
<keyword id="KW-0904">Protein phosphatase</keyword>
<keyword id="KW-1185">Reference proteome</keyword>
<keyword id="KW-0677">Repeat</keyword>
<keyword id="KW-0749">Sporulation</keyword>
<keyword id="KW-0802">TPR repeat</keyword>
<accession>P45943</accession>
<proteinExistence type="evidence at protein level"/>
<organism>
    <name type="scientific">Bacillus subtilis (strain 168)</name>
    <dbReference type="NCBI Taxonomy" id="224308"/>
    <lineage>
        <taxon>Bacteria</taxon>
        <taxon>Bacillati</taxon>
        <taxon>Bacillota</taxon>
        <taxon>Bacilli</taxon>
        <taxon>Bacillales</taxon>
        <taxon>Bacillaceae</taxon>
        <taxon>Bacillus</taxon>
    </lineage>
</organism>
<name>RAPE_BACSU</name>
<feature type="chain" id="PRO_0000106439" description="Response regulator aspartate phosphatase E">
    <location>
        <begin position="1"/>
        <end position="375"/>
    </location>
</feature>
<feature type="repeat" description="TPR 1" evidence="1">
    <location>
        <begin position="96"/>
        <end position="129"/>
    </location>
</feature>
<feature type="repeat" description="TPR 2" evidence="1">
    <location>
        <begin position="177"/>
        <end position="210"/>
    </location>
</feature>
<feature type="repeat" description="TPR 3" evidence="1">
    <location>
        <begin position="219"/>
        <end position="252"/>
    </location>
</feature>
<feature type="repeat" description="TPR 4" evidence="1">
    <location>
        <begin position="258"/>
        <end position="291"/>
    </location>
</feature>
<feature type="repeat" description="TPR 5" evidence="1">
    <location>
        <begin position="297"/>
        <end position="330"/>
    </location>
</feature>
<feature type="repeat" description="TPR 6" evidence="1">
    <location>
        <begin position="333"/>
        <end position="366"/>
    </location>
</feature>
<feature type="coiled-coil region" evidence="1">
    <location>
        <begin position="24"/>
        <end position="95"/>
    </location>
</feature>
<feature type="sequence conflict" description="In Ref. 1; BAA06965 and 2; BAA12429." evidence="3" ref="1 2">
    <original>E</original>
    <variation>G</variation>
    <location>
        <position position="275"/>
    </location>
</feature>
<comment type="function">
    <text evidence="2">Involved in the regulation of sporulation (PubMed:10629174). Acts as a phosphatase that specifically dephosphorylates the sporulation initiation phosphotransferase Spo0F and inhibits its activity (PubMed:10629174). Probably plays a dispensable role in the overall context of sporulation initiation (PubMed:10629174).</text>
</comment>
<comment type="activity regulation">
    <text evidence="2">Phosphatase activity is inhibited by the phosphatase regulator PhrE.</text>
</comment>
<comment type="subcellular location">
    <subcellularLocation>
        <location evidence="3">Cytoplasm</location>
    </subcellularLocation>
</comment>
<comment type="induction">
    <text evidence="2">Transcription is under the control of the ComA-ComP two-component system.</text>
</comment>
<comment type="similarity">
    <text evidence="3">Belongs to the Rap family.</text>
</comment>
<sequence>MISITSAEVGMKINEWHRHIQKFNVTDAEMLKAEIERDIEVMEEDQDLLIYYQLMAFRHKIMLEYTLPSDENRMELSEYLNKIEGHKKKLDNMRAYYYNFFRGMYEFRNGEYTRAITYYKKAERKIPTISDKIEKAEFYFKLSEVYYHMKMTHISMHYAELSYNIYKKHELYSVRRIQCHFVIAGNYDDLENHEKALPHLQEALKGAELLKSKNTHIYATAFFNLGNCYHKMDNLNKAARYIEQALVQYRKINSDVLPQAYHDLALIYFKQGKKEQAMDCFRKGIRSAVDFKDELFMNLFEALDVLYIRNGDTPKLLNIFSRLENGKGYPYLEELALLGGNLFDYNGKIEDSIICFKKMVYAQKQISKGECMYEI</sequence>